<protein>
    <recommendedName>
        <fullName evidence="1">Argininosuccinate synthase</fullName>
        <ecNumber evidence="1">6.3.4.5</ecNumber>
    </recommendedName>
    <alternativeName>
        <fullName evidence="1">Citrulline--aspartate ligase</fullName>
    </alternativeName>
</protein>
<accession>A8Z067</accession>
<reference key="1">
    <citation type="journal article" date="2007" name="BMC Microbiol.">
        <title>Subtle genetic changes enhance virulence of methicillin resistant and sensitive Staphylococcus aureus.</title>
        <authorList>
            <person name="Highlander S.K."/>
            <person name="Hulten K.G."/>
            <person name="Qin X."/>
            <person name="Jiang H."/>
            <person name="Yerrapragada S."/>
            <person name="Mason E.O. Jr."/>
            <person name="Shang Y."/>
            <person name="Williams T.M."/>
            <person name="Fortunov R.M."/>
            <person name="Liu Y."/>
            <person name="Igboeli O."/>
            <person name="Petrosino J."/>
            <person name="Tirumalai M."/>
            <person name="Uzman A."/>
            <person name="Fox G.E."/>
            <person name="Cardenas A.M."/>
            <person name="Muzny D.M."/>
            <person name="Hemphill L."/>
            <person name="Ding Y."/>
            <person name="Dugan S."/>
            <person name="Blyth P.R."/>
            <person name="Buhay C.J."/>
            <person name="Dinh H.H."/>
            <person name="Hawes A.C."/>
            <person name="Holder M."/>
            <person name="Kovar C.L."/>
            <person name="Lee S.L."/>
            <person name="Liu W."/>
            <person name="Nazareth L.V."/>
            <person name="Wang Q."/>
            <person name="Zhou J."/>
            <person name="Kaplan S.L."/>
            <person name="Weinstock G.M."/>
        </authorList>
    </citation>
    <scope>NUCLEOTIDE SEQUENCE [LARGE SCALE GENOMIC DNA]</scope>
    <source>
        <strain>USA300 / TCH1516</strain>
    </source>
</reference>
<name>ASSY_STAAT</name>
<proteinExistence type="inferred from homology"/>
<feature type="chain" id="PRO_1000073835" description="Argininosuccinate synthase">
    <location>
        <begin position="1"/>
        <end position="401"/>
    </location>
</feature>
<feature type="binding site" evidence="1">
    <location>
        <begin position="8"/>
        <end position="16"/>
    </location>
    <ligand>
        <name>ATP</name>
        <dbReference type="ChEBI" id="CHEBI:30616"/>
    </ligand>
</feature>
<feature type="binding site" evidence="1">
    <location>
        <position position="85"/>
    </location>
    <ligand>
        <name>L-citrulline</name>
        <dbReference type="ChEBI" id="CHEBI:57743"/>
    </ligand>
</feature>
<feature type="binding site" evidence="1">
    <location>
        <position position="115"/>
    </location>
    <ligand>
        <name>ATP</name>
        <dbReference type="ChEBI" id="CHEBI:30616"/>
    </ligand>
</feature>
<feature type="binding site" evidence="1">
    <location>
        <position position="117"/>
    </location>
    <ligand>
        <name>L-aspartate</name>
        <dbReference type="ChEBI" id="CHEBI:29991"/>
    </ligand>
</feature>
<feature type="binding site" evidence="1">
    <location>
        <position position="121"/>
    </location>
    <ligand>
        <name>L-aspartate</name>
        <dbReference type="ChEBI" id="CHEBI:29991"/>
    </ligand>
</feature>
<feature type="binding site" evidence="1">
    <location>
        <position position="121"/>
    </location>
    <ligand>
        <name>L-citrulline</name>
        <dbReference type="ChEBI" id="CHEBI:57743"/>
    </ligand>
</feature>
<feature type="binding site" evidence="1">
    <location>
        <position position="122"/>
    </location>
    <ligand>
        <name>L-aspartate</name>
        <dbReference type="ChEBI" id="CHEBI:29991"/>
    </ligand>
</feature>
<feature type="binding site" evidence="1">
    <location>
        <position position="125"/>
    </location>
    <ligand>
        <name>L-citrulline</name>
        <dbReference type="ChEBI" id="CHEBI:57743"/>
    </ligand>
</feature>
<feature type="binding site" evidence="1">
    <location>
        <position position="173"/>
    </location>
    <ligand>
        <name>L-citrulline</name>
        <dbReference type="ChEBI" id="CHEBI:57743"/>
    </ligand>
</feature>
<feature type="binding site" evidence="1">
    <location>
        <position position="258"/>
    </location>
    <ligand>
        <name>L-citrulline</name>
        <dbReference type="ChEBI" id="CHEBI:57743"/>
    </ligand>
</feature>
<feature type="binding site" evidence="1">
    <location>
        <position position="270"/>
    </location>
    <ligand>
        <name>L-citrulline</name>
        <dbReference type="ChEBI" id="CHEBI:57743"/>
    </ligand>
</feature>
<comment type="catalytic activity">
    <reaction evidence="1">
        <text>L-citrulline + L-aspartate + ATP = 2-(N(omega)-L-arginino)succinate + AMP + diphosphate + H(+)</text>
        <dbReference type="Rhea" id="RHEA:10932"/>
        <dbReference type="ChEBI" id="CHEBI:15378"/>
        <dbReference type="ChEBI" id="CHEBI:29991"/>
        <dbReference type="ChEBI" id="CHEBI:30616"/>
        <dbReference type="ChEBI" id="CHEBI:33019"/>
        <dbReference type="ChEBI" id="CHEBI:57472"/>
        <dbReference type="ChEBI" id="CHEBI:57743"/>
        <dbReference type="ChEBI" id="CHEBI:456215"/>
        <dbReference type="EC" id="6.3.4.5"/>
    </reaction>
</comment>
<comment type="pathway">
    <text evidence="1">Amino-acid biosynthesis; L-arginine biosynthesis; L-arginine from L-ornithine and carbamoyl phosphate: step 2/3.</text>
</comment>
<comment type="subunit">
    <text evidence="1">Homotetramer.</text>
</comment>
<comment type="subcellular location">
    <subcellularLocation>
        <location evidence="1">Cytoplasm</location>
    </subcellularLocation>
</comment>
<comment type="similarity">
    <text evidence="1">Belongs to the argininosuccinate synthase family. Type 1 subfamily.</text>
</comment>
<sequence length="401" mass="44455">MKEKIVLAYSGGLDTSVAVQWLIDKGYDVVACCLDVGEGKDLDIVYKKALDMGAVECHIIDATKEFSDEYVSYAIKGNLMYENAYPLVSALSRPLIAKKLVEIAEKTNSVGIAHGCTGKGNDQVRFEVAIKALNPSLKAFAPVREWAWSREEEIDYAIKHNIPVSINHDSPYSIDQNLWGRANECGILEDPYAAPPEDAFDLTNALEETPDTADEIILTFDKGIPVQIDGKTYELDDLILTLNALAGKHGIGRIDHVENRLVGIKSREIYEAPAAEVILKAHKALETITLTKDVAHFKPIIEKQFAEQLYNGLWFSPLTDSLKLFIDSTQQYVSGDVRIKLFKGNAIVNGRKSPYTLYDEKLATYTKEDAFNQDAAVGFIDIYGLPTQVNAMLHGGYSNEQ</sequence>
<dbReference type="EC" id="6.3.4.5" evidence="1"/>
<dbReference type="EMBL" id="CP000730">
    <property type="protein sequence ID" value="ABX28941.1"/>
    <property type="molecule type" value="Genomic_DNA"/>
</dbReference>
<dbReference type="RefSeq" id="WP_000660045.1">
    <property type="nucleotide sequence ID" value="NC_010079.1"/>
</dbReference>
<dbReference type="SMR" id="A8Z067"/>
<dbReference type="KEGG" id="sax:USA300HOU_0920"/>
<dbReference type="HOGENOM" id="CLU_032784_4_2_9"/>
<dbReference type="UniPathway" id="UPA00068">
    <property type="reaction ID" value="UER00113"/>
</dbReference>
<dbReference type="GO" id="GO:0005737">
    <property type="term" value="C:cytoplasm"/>
    <property type="evidence" value="ECO:0007669"/>
    <property type="project" value="UniProtKB-SubCell"/>
</dbReference>
<dbReference type="GO" id="GO:0004055">
    <property type="term" value="F:argininosuccinate synthase activity"/>
    <property type="evidence" value="ECO:0007669"/>
    <property type="project" value="UniProtKB-UniRule"/>
</dbReference>
<dbReference type="GO" id="GO:0005524">
    <property type="term" value="F:ATP binding"/>
    <property type="evidence" value="ECO:0007669"/>
    <property type="project" value="UniProtKB-UniRule"/>
</dbReference>
<dbReference type="GO" id="GO:0000053">
    <property type="term" value="P:argininosuccinate metabolic process"/>
    <property type="evidence" value="ECO:0007669"/>
    <property type="project" value="TreeGrafter"/>
</dbReference>
<dbReference type="GO" id="GO:0006526">
    <property type="term" value="P:L-arginine biosynthetic process"/>
    <property type="evidence" value="ECO:0007669"/>
    <property type="project" value="UniProtKB-UniRule"/>
</dbReference>
<dbReference type="GO" id="GO:0000050">
    <property type="term" value="P:urea cycle"/>
    <property type="evidence" value="ECO:0007669"/>
    <property type="project" value="TreeGrafter"/>
</dbReference>
<dbReference type="CDD" id="cd01999">
    <property type="entry name" value="ASS"/>
    <property type="match status" value="1"/>
</dbReference>
<dbReference type="FunFam" id="1.20.5.470:FF:000002">
    <property type="entry name" value="Argininosuccinate synthase"/>
    <property type="match status" value="1"/>
</dbReference>
<dbReference type="FunFam" id="3.40.50.620:FF:000038">
    <property type="entry name" value="Argininosuccinate synthase"/>
    <property type="match status" value="1"/>
</dbReference>
<dbReference type="FunFam" id="3.90.1260.10:FF:000007">
    <property type="entry name" value="Argininosuccinate synthase"/>
    <property type="match status" value="1"/>
</dbReference>
<dbReference type="Gene3D" id="3.90.1260.10">
    <property type="entry name" value="Argininosuccinate synthetase, chain A, domain 2"/>
    <property type="match status" value="1"/>
</dbReference>
<dbReference type="Gene3D" id="3.40.50.620">
    <property type="entry name" value="HUPs"/>
    <property type="match status" value="1"/>
</dbReference>
<dbReference type="Gene3D" id="1.20.5.470">
    <property type="entry name" value="Single helix bin"/>
    <property type="match status" value="1"/>
</dbReference>
<dbReference type="HAMAP" id="MF_00005">
    <property type="entry name" value="Arg_succ_synth_type1"/>
    <property type="match status" value="1"/>
</dbReference>
<dbReference type="InterPro" id="IPR048268">
    <property type="entry name" value="Arginosuc_syn_C"/>
</dbReference>
<dbReference type="InterPro" id="IPR048267">
    <property type="entry name" value="Arginosuc_syn_N"/>
</dbReference>
<dbReference type="InterPro" id="IPR001518">
    <property type="entry name" value="Arginosuc_synth"/>
</dbReference>
<dbReference type="InterPro" id="IPR018223">
    <property type="entry name" value="Arginosuc_synth_CS"/>
</dbReference>
<dbReference type="InterPro" id="IPR023434">
    <property type="entry name" value="Arginosuc_synth_type_1_subfam"/>
</dbReference>
<dbReference type="InterPro" id="IPR024074">
    <property type="entry name" value="AS_cat/multimer_dom_body"/>
</dbReference>
<dbReference type="InterPro" id="IPR014729">
    <property type="entry name" value="Rossmann-like_a/b/a_fold"/>
</dbReference>
<dbReference type="NCBIfam" id="TIGR00032">
    <property type="entry name" value="argG"/>
    <property type="match status" value="1"/>
</dbReference>
<dbReference type="NCBIfam" id="NF001770">
    <property type="entry name" value="PRK00509.1"/>
    <property type="match status" value="1"/>
</dbReference>
<dbReference type="PANTHER" id="PTHR11587">
    <property type="entry name" value="ARGININOSUCCINATE SYNTHASE"/>
    <property type="match status" value="1"/>
</dbReference>
<dbReference type="PANTHER" id="PTHR11587:SF2">
    <property type="entry name" value="ARGININOSUCCINATE SYNTHASE"/>
    <property type="match status" value="1"/>
</dbReference>
<dbReference type="Pfam" id="PF20979">
    <property type="entry name" value="Arginosuc_syn_C"/>
    <property type="match status" value="1"/>
</dbReference>
<dbReference type="Pfam" id="PF00764">
    <property type="entry name" value="Arginosuc_synth"/>
    <property type="match status" value="1"/>
</dbReference>
<dbReference type="SUPFAM" id="SSF52402">
    <property type="entry name" value="Adenine nucleotide alpha hydrolases-like"/>
    <property type="match status" value="1"/>
</dbReference>
<dbReference type="SUPFAM" id="SSF69864">
    <property type="entry name" value="Argininosuccinate synthetase, C-terminal domain"/>
    <property type="match status" value="1"/>
</dbReference>
<dbReference type="PROSITE" id="PS00564">
    <property type="entry name" value="ARGININOSUCCIN_SYN_1"/>
    <property type="match status" value="1"/>
</dbReference>
<dbReference type="PROSITE" id="PS00565">
    <property type="entry name" value="ARGININOSUCCIN_SYN_2"/>
    <property type="match status" value="1"/>
</dbReference>
<gene>
    <name evidence="1" type="primary">argG</name>
    <name type="ordered locus">USA300HOU_0920</name>
</gene>
<organism>
    <name type="scientific">Staphylococcus aureus (strain USA300 / TCH1516)</name>
    <dbReference type="NCBI Taxonomy" id="451516"/>
    <lineage>
        <taxon>Bacteria</taxon>
        <taxon>Bacillati</taxon>
        <taxon>Bacillota</taxon>
        <taxon>Bacilli</taxon>
        <taxon>Bacillales</taxon>
        <taxon>Staphylococcaceae</taxon>
        <taxon>Staphylococcus</taxon>
    </lineage>
</organism>
<keyword id="KW-0028">Amino-acid biosynthesis</keyword>
<keyword id="KW-0055">Arginine biosynthesis</keyword>
<keyword id="KW-0067">ATP-binding</keyword>
<keyword id="KW-0963">Cytoplasm</keyword>
<keyword id="KW-0436">Ligase</keyword>
<keyword id="KW-0547">Nucleotide-binding</keyword>
<evidence type="ECO:0000255" key="1">
    <source>
        <dbReference type="HAMAP-Rule" id="MF_00005"/>
    </source>
</evidence>